<accession>Q9FJF4</accession>
<proteinExistence type="evidence at protein level"/>
<organism>
    <name type="scientific">Arabidopsis thaliana</name>
    <name type="common">Mouse-ear cress</name>
    <dbReference type="NCBI Taxonomy" id="3702"/>
    <lineage>
        <taxon>Eukaryota</taxon>
        <taxon>Viridiplantae</taxon>
        <taxon>Streptophyta</taxon>
        <taxon>Embryophyta</taxon>
        <taxon>Tracheophyta</taxon>
        <taxon>Spermatophyta</taxon>
        <taxon>Magnoliopsida</taxon>
        <taxon>eudicotyledons</taxon>
        <taxon>Gunneridae</taxon>
        <taxon>Pentapetalae</taxon>
        <taxon>rosids</taxon>
        <taxon>malvids</taxon>
        <taxon>Brassicales</taxon>
        <taxon>Brassicaceae</taxon>
        <taxon>Camelineae</taxon>
        <taxon>Arabidopsis</taxon>
    </lineage>
</organism>
<keyword id="KW-0025">Alternative splicing</keyword>
<keyword id="KW-0158">Chromosome</keyword>
<keyword id="KW-0238">DNA-binding</keyword>
<keyword id="KW-0488">Methylation</keyword>
<keyword id="KW-0539">Nucleus</keyword>
<keyword id="KW-1185">Reference proteome</keyword>
<keyword id="KW-0677">Repeat</keyword>
<keyword id="KW-0804">Transcription</keyword>
<keyword id="KW-0805">Transcription regulation</keyword>
<gene>
    <name evidence="14" type="primary">MBD7</name>
    <name evidence="17" type="ordered locus">At5g59800</name>
    <name evidence="18" type="ORF">MMN10.2</name>
</gene>
<dbReference type="EMBL" id="AB015475">
    <property type="protein sequence ID" value="BAB08347.1"/>
    <property type="molecule type" value="Genomic_DNA"/>
</dbReference>
<dbReference type="EMBL" id="CP002688">
    <property type="protein sequence ID" value="AED97235.1"/>
    <property type="molecule type" value="Genomic_DNA"/>
</dbReference>
<dbReference type="EMBL" id="BT014975">
    <property type="protein sequence ID" value="AAT70426.1"/>
    <property type="molecule type" value="mRNA"/>
</dbReference>
<dbReference type="EMBL" id="BT015848">
    <property type="protein sequence ID" value="AAU94411.1"/>
    <property type="molecule type" value="mRNA"/>
</dbReference>
<dbReference type="EMBL" id="BX829918">
    <property type="status" value="NOT_ANNOTATED_CDS"/>
    <property type="molecule type" value="mRNA"/>
</dbReference>
<dbReference type="RefSeq" id="NP_200788.1">
    <molecule id="Q9FJF4-1"/>
    <property type="nucleotide sequence ID" value="NM_125372.4"/>
</dbReference>
<dbReference type="SMR" id="Q9FJF4"/>
<dbReference type="BioGRID" id="21345">
    <property type="interactions" value="10"/>
</dbReference>
<dbReference type="FunCoup" id="Q9FJF4">
    <property type="interactions" value="139"/>
</dbReference>
<dbReference type="IntAct" id="Q9FJF4">
    <property type="interactions" value="6"/>
</dbReference>
<dbReference type="STRING" id="3702.Q9FJF4"/>
<dbReference type="iPTMnet" id="Q9FJF4"/>
<dbReference type="PaxDb" id="3702-AT5G59800.1"/>
<dbReference type="ProteomicsDB" id="238353">
    <molecule id="Q9FJF4-1"/>
</dbReference>
<dbReference type="EnsemblPlants" id="AT5G59800.1">
    <molecule id="Q9FJF4-1"/>
    <property type="protein sequence ID" value="AT5G59800.1"/>
    <property type="gene ID" value="AT5G59800"/>
</dbReference>
<dbReference type="GeneID" id="836101"/>
<dbReference type="Gramene" id="AT5G59800.1">
    <molecule id="Q9FJF4-1"/>
    <property type="protein sequence ID" value="AT5G59800.1"/>
    <property type="gene ID" value="AT5G59800"/>
</dbReference>
<dbReference type="KEGG" id="ath:AT5G59800"/>
<dbReference type="Araport" id="AT5G59800"/>
<dbReference type="TAIR" id="AT5G59800">
    <property type="gene designation" value="MBD7"/>
</dbReference>
<dbReference type="eggNOG" id="KOG4161">
    <property type="taxonomic scope" value="Eukaryota"/>
</dbReference>
<dbReference type="HOGENOM" id="CLU_047890_0_0_1"/>
<dbReference type="InParanoid" id="Q9FJF4"/>
<dbReference type="OMA" id="HIDRSYI"/>
<dbReference type="PhylomeDB" id="Q9FJF4"/>
<dbReference type="PRO" id="PR:Q9FJF4"/>
<dbReference type="Proteomes" id="UP000006548">
    <property type="component" value="Chromosome 5"/>
</dbReference>
<dbReference type="ExpressionAtlas" id="Q9FJF4">
    <property type="expression patterns" value="baseline and differential"/>
</dbReference>
<dbReference type="GO" id="GO:0010369">
    <property type="term" value="C:chromocenter"/>
    <property type="evidence" value="ECO:0000314"/>
    <property type="project" value="UniProtKB"/>
</dbReference>
<dbReference type="GO" id="GO:0005694">
    <property type="term" value="C:chromosome"/>
    <property type="evidence" value="ECO:0007669"/>
    <property type="project" value="UniProtKB-SubCell"/>
</dbReference>
<dbReference type="GO" id="GO:0005634">
    <property type="term" value="C:nucleus"/>
    <property type="evidence" value="ECO:0000314"/>
    <property type="project" value="UniProtKB"/>
</dbReference>
<dbReference type="GO" id="GO:0019899">
    <property type="term" value="F:enzyme binding"/>
    <property type="evidence" value="ECO:0000353"/>
    <property type="project" value="UniProtKB"/>
</dbReference>
<dbReference type="GO" id="GO:0008327">
    <property type="term" value="F:methyl-CpG binding"/>
    <property type="evidence" value="ECO:0000314"/>
    <property type="project" value="TAIR"/>
</dbReference>
<dbReference type="CDD" id="cd01396">
    <property type="entry name" value="MeCP2_MBD"/>
    <property type="match status" value="1"/>
</dbReference>
<dbReference type="Gene3D" id="3.30.890.10">
    <property type="entry name" value="Methyl-cpg-binding Protein 2, Chain A"/>
    <property type="match status" value="3"/>
</dbReference>
<dbReference type="InterPro" id="IPR016177">
    <property type="entry name" value="DNA-bd_dom_sf"/>
</dbReference>
<dbReference type="InterPro" id="IPR001739">
    <property type="entry name" value="Methyl_CpG_DNA-bd"/>
</dbReference>
<dbReference type="PANTHER" id="PTHR12396">
    <property type="entry name" value="METHYL-CPG BINDING PROTEIN, MBD"/>
    <property type="match status" value="1"/>
</dbReference>
<dbReference type="PANTHER" id="PTHR12396:SF38">
    <property type="entry name" value="METHYL-CPG-BINDING DOMAIN-CONTAINING PROTEIN 7"/>
    <property type="match status" value="1"/>
</dbReference>
<dbReference type="Pfam" id="PF01429">
    <property type="entry name" value="MBD"/>
    <property type="match status" value="2"/>
</dbReference>
<dbReference type="SUPFAM" id="SSF54171">
    <property type="entry name" value="DNA-binding domain"/>
    <property type="match status" value="3"/>
</dbReference>
<dbReference type="PROSITE" id="PS50982">
    <property type="entry name" value="MBD"/>
    <property type="match status" value="3"/>
</dbReference>
<name>MBD7_ARATH</name>
<evidence type="ECO:0000250" key="1"/>
<evidence type="ECO:0000255" key="2">
    <source>
        <dbReference type="PROSITE-ProRule" id="PRU00338"/>
    </source>
</evidence>
<evidence type="ECO:0000256" key="3">
    <source>
        <dbReference type="SAM" id="MobiDB-lite"/>
    </source>
</evidence>
<evidence type="ECO:0000269" key="4">
    <source>
    </source>
</evidence>
<evidence type="ECO:0000269" key="5">
    <source>
    </source>
</evidence>
<evidence type="ECO:0000269" key="6">
    <source>
    </source>
</evidence>
<evidence type="ECO:0000269" key="7">
    <source>
    </source>
</evidence>
<evidence type="ECO:0000269" key="8">
    <source>
    </source>
</evidence>
<evidence type="ECO:0000269" key="9">
    <source>
    </source>
</evidence>
<evidence type="ECO:0000269" key="10">
    <source>
    </source>
</evidence>
<evidence type="ECO:0000269" key="11">
    <source>
    </source>
</evidence>
<evidence type="ECO:0000269" key="12">
    <source>
    </source>
</evidence>
<evidence type="ECO:0000269" key="13">
    <source>
    </source>
</evidence>
<evidence type="ECO:0000303" key="14">
    <source>
    </source>
</evidence>
<evidence type="ECO:0000303" key="15">
    <source>
    </source>
</evidence>
<evidence type="ECO:0000305" key="16">
    <source>
    </source>
</evidence>
<evidence type="ECO:0000312" key="17">
    <source>
        <dbReference type="Araport" id="AT5G59800"/>
    </source>
</evidence>
<evidence type="ECO:0000312" key="18">
    <source>
        <dbReference type="EMBL" id="BAB08347.1"/>
    </source>
</evidence>
<comment type="function">
    <text evidence="4 10 12 13">Transcriptional regulator that binds CpG islands in promoters where the DNA is methylated at position 5 of cytosine within CpG dinucleotides. May directly affect chromatin structure by inducing intra- and inter- chromatin compaction via bridging over multiple methylated CpG sites. Acts as an anti-silencing factor that prevents DNA hypermethylation and gene repression (PubMed:25684209). Requires high mCG density for binding (PubMed:25593350, PubMed:25684209). Recognizes preferentially mCGs located in transposable elements (PubMed:25593350, PubMed:25684209). Required for active DNA demethylation (PubMed:25593350). Prefers to target genomic loci around chromocenters (PubMed:25593350).</text>
</comment>
<comment type="subunit">
    <text evidence="9 12 13">Interacts with PRMT11 (PubMed:17711414). Interacts (via C-terminus) with IDM2, but not with IDM1 (PubMed:25593350, PubMed:25684209). Interacts with IDM3 (PubMed:25684209). Part of a complex made of MBD7, IDM1, IDM2 and IDM3 (PubMed:25684209).</text>
</comment>
<comment type="subcellular location">
    <subcellularLocation>
        <location evidence="6 7 8 9 10 12">Nucleus</location>
    </subcellularLocation>
    <subcellularLocation>
        <location evidence="6 8 10 12">Chromosome</location>
    </subcellularLocation>
    <text evidence="6 8 9 10 12">Associated with heterochromatin, at all chromocenters. Excluded from nucleolus.</text>
</comment>
<comment type="alternative products">
    <event type="alternative splicing"/>
    <isoform>
        <id>Q9FJF4-1</id>
        <name>1</name>
        <name>AtMBD7a</name>
        <sequence type="displayed"/>
    </isoform>
    <isoform>
        <id>Q9FJF4-2</id>
        <name>2</name>
        <name>AtMBD7b</name>
        <sequence type="described" ref="VSP_040659"/>
    </isoform>
    <isoform>
        <id>Q9FJF4-3</id>
        <name>3</name>
        <name>AtMBD7b</name>
        <sequence type="described" ref="VSP_040658"/>
    </isoform>
</comment>
<comment type="tissue specificity">
    <text evidence="5">Expressed in leaves, buds, flowers, stems, siliques, mature seeds and roots.</text>
</comment>
<comment type="developmental stage">
    <text evidence="12">Highly expressed at the early seedling stage.</text>
</comment>
<comment type="domain">
    <text evidence="1 11 13">The methyl-CpG-binding domain (MBD) functions both in binding to methylated DNA and in protein interactions (By similarity). The number of MBD domains may affect binding affinity, mobility within the nucleus, and subnuclear localization (By similarity). The C-terminal domain (232-306) has a very strong chromatin binding affinity and thus is coined 'sticky-C' (StkC) (PubMed:19647732). StkC confers intranuclear immobility, but has no effect on subnuclear localization (PubMed:19647732). It is necessary for the interaction with IDM2 and IDM3, and for the anti-silencing function (PubMed:25684209).</text>
</comment>
<comment type="PTM">
    <text evidence="9">Methylated by PRMT11.</text>
</comment>
<comment type="disruption phenotype">
    <text evidence="13">DNA hypermethylation and transgene silencing phenotype.</text>
</comment>
<reference key="1">
    <citation type="journal article" date="1998" name="DNA Res.">
        <title>Structural analysis of Arabidopsis thaliana chromosome 5. VII. Sequence features of the regions of 1,013,767 bp covered by sixteen physically assigned P1 and TAC clones.</title>
        <authorList>
            <person name="Nakamura Y."/>
            <person name="Sato S."/>
            <person name="Asamizu E."/>
            <person name="Kaneko T."/>
            <person name="Kotani H."/>
            <person name="Miyajima N."/>
            <person name="Tabata S."/>
        </authorList>
    </citation>
    <scope>NUCLEOTIDE SEQUENCE [LARGE SCALE GENOMIC DNA]</scope>
    <source>
        <strain>cv. Columbia</strain>
    </source>
</reference>
<reference key="2">
    <citation type="journal article" date="2017" name="Plant J.">
        <title>Araport11: a complete reannotation of the Arabidopsis thaliana reference genome.</title>
        <authorList>
            <person name="Cheng C.Y."/>
            <person name="Krishnakumar V."/>
            <person name="Chan A.P."/>
            <person name="Thibaud-Nissen F."/>
            <person name="Schobel S."/>
            <person name="Town C.D."/>
        </authorList>
    </citation>
    <scope>GENOME REANNOTATION</scope>
    <source>
        <strain>cv. Columbia</strain>
    </source>
</reference>
<reference key="3">
    <citation type="submission" date="2004-10" db="EMBL/GenBank/DDBJ databases">
        <title>Arabidopsis ORF clones.</title>
        <authorList>
            <person name="Kim C.J."/>
            <person name="Chen H."/>
            <person name="Cheuk R.F."/>
            <person name="Shinn P."/>
            <person name="Ecker J.R."/>
        </authorList>
    </citation>
    <scope>NUCLEOTIDE SEQUENCE [LARGE SCALE MRNA] (ISOFORM 1)</scope>
    <source>
        <strain>cv. Columbia</strain>
    </source>
</reference>
<reference key="4">
    <citation type="journal article" date="2004" name="Genome Res.">
        <title>Whole genome sequence comparisons and 'full-length' cDNA sequences: a combined approach to evaluate and improve Arabidopsis genome annotation.</title>
        <authorList>
            <person name="Castelli V."/>
            <person name="Aury J.-M."/>
            <person name="Jaillon O."/>
            <person name="Wincker P."/>
            <person name="Clepet C."/>
            <person name="Menard M."/>
            <person name="Cruaud C."/>
            <person name="Quetier F."/>
            <person name="Scarpelli C."/>
            <person name="Schaechter V."/>
            <person name="Temple G."/>
            <person name="Caboche M."/>
            <person name="Weissenbach J."/>
            <person name="Salanoubat M."/>
        </authorList>
    </citation>
    <scope>NUCLEOTIDE SEQUENCE [LARGE SCALE MRNA] (ISOFORMS 2 AND 3)</scope>
    <source>
        <strain>cv. Columbia</strain>
    </source>
</reference>
<reference key="5">
    <citation type="journal article" date="2003" name="Nucleic Acids Res.">
        <title>Ten members of the Arabidopsis gene family encoding methyl-CpG-binding domain proteins are transcriptionally active and at least one, AtMBD11, is crucial for normal development.</title>
        <authorList>
            <person name="Berg A."/>
            <person name="Meza T.J."/>
            <person name="Mahic M."/>
            <person name="Thorstensen T."/>
            <person name="Kristiansen K."/>
            <person name="Aalen R.B."/>
        </authorList>
    </citation>
    <scope>ALTERNATIVE SPLICING</scope>
    <scope>TISSUE SPECIFICITY</scope>
    <scope>GENE FAMILY</scope>
    <scope>NOMENCLATURE</scope>
</reference>
<reference key="6">
    <citation type="journal article" date="2003" name="Plant J.">
        <title>Characterization of Arabidopsis thaliana methyl-CpG-binding domain (MBD) proteins.</title>
        <authorList>
            <person name="Zemach A."/>
            <person name="Grafi G."/>
        </authorList>
    </citation>
    <scope>FUNCTION</scope>
</reference>
<reference key="7">
    <citation type="journal article" date="2003" name="Plant Physiol.">
        <title>Methylated DNA-binding proteins from Arabidopsis.</title>
        <authorList>
            <person name="Ito M."/>
            <person name="Koike A."/>
            <person name="Koizumi N."/>
            <person name="Sano H."/>
        </authorList>
    </citation>
    <scope>SUBCELLULAR LOCATION</scope>
</reference>
<reference key="8">
    <citation type="journal article" date="2005" name="Plant Cell">
        <title>DDM1 binds Arabidopsis methyl-CpG binding domain proteins and affects their subnuclear localization.</title>
        <authorList>
            <person name="Zemach A."/>
            <person name="Li Y."/>
            <person name="Wayburn B."/>
            <person name="Ben-Meir H."/>
            <person name="Kiss V."/>
            <person name="Avivi Y."/>
            <person name="Kalchenko V."/>
            <person name="Jacobsen S.E."/>
            <person name="Grafi G."/>
        </authorList>
    </citation>
    <scope>SUBCELLULAR LOCATION</scope>
</reference>
<reference key="9">
    <citation type="journal article" date="2005" name="Plant Physiol.">
        <title>Evolutionary divergence of monocot and dicot methyl-CpG-binding domain proteins.</title>
        <authorList>
            <person name="Springer N.M."/>
            <person name="Kaeppler S.M."/>
        </authorList>
    </citation>
    <scope>GENE FAMILY</scope>
</reference>
<reference key="10">
    <citation type="journal article" date="2007" name="Plant J.">
        <title>PRMT11: a new Arabidopsis MBD7 protein partner with arginine methyltransferase activity.</title>
        <authorList>
            <person name="Scebba F."/>
            <person name="De Bastiani M."/>
            <person name="Bernacchia G."/>
            <person name="Andreucci A."/>
            <person name="Galli A."/>
            <person name="Pitto L."/>
        </authorList>
    </citation>
    <scope>INTERACTION WITH PRMT11</scope>
    <scope>SUBCELLULAR LOCATION</scope>
    <scope>METHYLATION AT ARG-118; ARG-145 AND ARG-174</scope>
    <source>
        <strain>cv. Columbia</strain>
        <strain>cv. Landsberg erecta</strain>
    </source>
</reference>
<reference key="11">
    <citation type="journal article" date="2007" name="Trends Plant Sci.">
        <title>Methyl-CpG-binding domain proteins in plants: interpreters of DNA methylation.</title>
        <authorList>
            <person name="Zemach A."/>
            <person name="Grafi G."/>
        </authorList>
    </citation>
    <scope>SUBCELLULAR LOCATION</scope>
    <scope>REVIEW</scope>
</reference>
<reference key="12">
    <citation type="journal article" date="2008" name="J. Biol. Chem.">
        <title>The three methyl-CpG-binding domains of AtMBD7 control its subnuclear localization and mobility.</title>
        <authorList>
            <person name="Zemach A."/>
            <person name="Gaspan O."/>
            <person name="Grafi G."/>
        </authorList>
    </citation>
    <scope>FUNCTION</scope>
    <scope>SUBCELLULAR LOCATION</scope>
</reference>
<reference key="13">
    <citation type="journal article" date="2009" name="Exp. Cell Res.">
        <title>The C-terminal domain of the Arabidopsis AtMBD7 protein confers strong chromatin binding activity.</title>
        <authorList>
            <person name="Zemach A."/>
            <person name="Paul L.K."/>
            <person name="Stambolsky P."/>
            <person name="Efroni I."/>
            <person name="Rotter V."/>
            <person name="Grafi G."/>
        </authorList>
    </citation>
    <scope>DOMAIN</scope>
    <scope>MUTAGENESIS OF 263-LYS--LYS-266; ILE-302; GLU-303; ASP-304; ARG-305 AND SER-306</scope>
</reference>
<reference key="14">
    <citation type="journal article" date="2015" name="Mol. Cell">
        <title>The methyl-CpG-binding protein MBD7 facilitates active DNA demethylation to limit DNA hyper-methylation and transcriptional gene silencing.</title>
        <authorList>
            <person name="Lang Z."/>
            <person name="Lei M."/>
            <person name="Wang X."/>
            <person name="Tang K."/>
            <person name="Miki D."/>
            <person name="Zhang H."/>
            <person name="Mangrauthia S.K."/>
            <person name="Liu W."/>
            <person name="Nie W."/>
            <person name="Ma G."/>
            <person name="Yan J."/>
            <person name="Duan C.G."/>
            <person name="Hsu C.C."/>
            <person name="Wang C."/>
            <person name="Tao W.A."/>
            <person name="Gong Z."/>
            <person name="Zhu J.K."/>
        </authorList>
    </citation>
    <scope>FUNCTION</scope>
    <scope>INTERACTION WITH IDM2 AND IDM3</scope>
    <scope>DISRUPTION PHENOTYPE</scope>
    <scope>DOMAIN</scope>
</reference>
<reference key="15">
    <citation type="journal article" date="2015" name="Plant Physiol.">
        <title>Methyl-CpG-binding domain protein MBD7 is required for active DNA demethylation in Arabidopsis.</title>
        <authorList>
            <person name="Wang C."/>
            <person name="Dong X."/>
            <person name="Jin D."/>
            <person name="Zhao Y."/>
            <person name="Xie S."/>
            <person name="Li X."/>
            <person name="He X."/>
            <person name="Lang Z."/>
            <person name="Lai J."/>
            <person name="Zhu J.K."/>
            <person name="Gong Z."/>
        </authorList>
    </citation>
    <scope>FUNCTION</scope>
    <scope>DEVELOPMENTAL STAGE</scope>
    <scope>INTERACTION WITH IDM2</scope>
    <scope>SUBCELLULAR LOCATION</scope>
</reference>
<feature type="chain" id="PRO_0000405283" description="Methyl-CpG-binding domain-containing protein 7">
    <location>
        <begin position="1"/>
        <end position="306"/>
    </location>
</feature>
<feature type="domain" description="MBD 1" evidence="2">
    <location>
        <begin position="21"/>
        <end position="92"/>
    </location>
</feature>
<feature type="domain" description="MBD 2" evidence="2">
    <location>
        <begin position="106"/>
        <end position="171"/>
    </location>
</feature>
<feature type="domain" description="MBD 3" evidence="2">
    <location>
        <begin position="172"/>
        <end position="242"/>
    </location>
</feature>
<feature type="region of interest" description="Disordered" evidence="3">
    <location>
        <begin position="1"/>
        <end position="21"/>
    </location>
</feature>
<feature type="region of interest" description="Required for interaction with PRMT11" evidence="9">
    <location>
        <begin position="163"/>
        <end position="306"/>
    </location>
</feature>
<feature type="compositionally biased region" description="Polar residues" evidence="3">
    <location>
        <begin position="1"/>
        <end position="11"/>
    </location>
</feature>
<feature type="modified residue" description="Asymmetric dimethylarginine" evidence="16">
    <location>
        <position position="118"/>
    </location>
</feature>
<feature type="modified residue" description="Asymmetric dimethylarginine" evidence="16">
    <location>
        <position position="145"/>
    </location>
</feature>
<feature type="modified residue" description="Asymmetric dimethylarginine" evidence="16">
    <location>
        <position position="174"/>
    </location>
</feature>
<feature type="splice variant" id="VSP_040658" description="In isoform 3." evidence="15">
    <original>MQTRSSSSPSANHRRETQLQIADPTSFCGKIMPGWTVVNRPRSSNNGVVDTYFIEPGTGRQFSSLEAIHRHLAGEVNDRRLTRAGSFFQDKTRVYEGSRTK</original>
    <variation>MLL</variation>
    <location>
        <begin position="1"/>
        <end position="101"/>
    </location>
</feature>
<feature type="splice variant" id="VSP_040659" description="In isoform 2." evidence="15">
    <original>DHCGVEYASKGFRLPRGWSVEEVPRKNSHYIDKYYVERKTGKRFRSLVSVERYLRESRNSIEQQLRVLQNRRGHSKDFRLPDGWIVEEKPRRSSSHIDRSYIEPGTGNKFRSMAAVERYLISVGNITLDSVSMVHSERLPLLMNRNGIRFQSEVIDPNPPKKVKWVLTGSGGNMFTANVRGSNVSSLVKHTWSEAFVSLIEDRS</original>
    <variation>VLCSDLKLQKHMVLLGSNT</variation>
    <location>
        <begin position="103"/>
        <end position="306"/>
    </location>
</feature>
<feature type="mutagenesis site" description="No effect on intranuclear immobility." evidence="11">
    <original>KKVK</original>
    <variation>AAVA</variation>
    <location>
        <begin position="263"/>
        <end position="266"/>
    </location>
</feature>
<feature type="mutagenesis site" description="Slight increase in intranuclear mobility." evidence="11">
    <original>I</original>
    <variation>A</variation>
    <location>
        <position position="302"/>
    </location>
</feature>
<feature type="mutagenesis site" description="Loss of intranuclear immobility." evidence="11">
    <original>E</original>
    <variation>A</variation>
    <location>
        <position position="303"/>
    </location>
</feature>
<feature type="mutagenesis site" description="Slight increase in intranuclear mobility." evidence="11">
    <original>D</original>
    <variation>A</variation>
    <location>
        <position position="304"/>
    </location>
</feature>
<feature type="mutagenesis site" description="No effect on intranuclear immobility." evidence="11">
    <original>R</original>
    <variation>A</variation>
    <location>
        <position position="305"/>
    </location>
</feature>
<feature type="mutagenesis site" description="No effect on intranuclear immobility." evidence="11">
    <original>S</original>
    <variation>A</variation>
    <location>
        <position position="306"/>
    </location>
</feature>
<protein>
    <recommendedName>
        <fullName evidence="14">Methyl-CpG-binding domain-containing protein 7</fullName>
        <shortName evidence="14">AtMBD7</shortName>
        <shortName evidence="14">MBD07</shortName>
    </recommendedName>
    <alternativeName>
        <fullName>Methyl-CpG-binding protein MBD7</fullName>
    </alternativeName>
</protein>
<sequence>MQTRSSSSPSANHRRETQLQIADPTSFCGKIMPGWTVVNRPRSSNNGVVDTYFIEPGTGRQFSSLEAIHRHLAGEVNDRRLTRAGSFFQDKTRVYEGSRTKQDHCGVEYASKGFRLPRGWSVEEVPRKNSHYIDKYYVERKTGKRFRSLVSVERYLRESRNSIEQQLRVLQNRRGHSKDFRLPDGWIVEEKPRRSSSHIDRSYIEPGTGNKFRSMAAVERYLISVGNITLDSVSMVHSERLPLLMNRNGIRFQSEVIDPNPPKKVKWVLTGSGGNMFTANVRGSNVSSLVKHTWSEAFVSLIEDRS</sequence>